<protein>
    <recommendedName>
        <fullName>Peptide chain release factor 3</fullName>
        <shortName>RF-3</shortName>
    </recommendedName>
</protein>
<reference key="1">
    <citation type="journal article" date="2001" name="Proc. Natl. Acad. Sci. U.S.A.">
        <title>Complete genomic sequence of Pasteurella multocida Pm70.</title>
        <authorList>
            <person name="May B.J."/>
            <person name="Zhang Q."/>
            <person name="Li L.L."/>
            <person name="Paustian M.L."/>
            <person name="Whittam T.S."/>
            <person name="Kapur V."/>
        </authorList>
    </citation>
    <scope>NUCLEOTIDE SEQUENCE [LARGE SCALE GENOMIC DNA]</scope>
    <source>
        <strain>Pm70</strain>
    </source>
</reference>
<proteinExistence type="inferred from homology"/>
<keyword id="KW-0963">Cytoplasm</keyword>
<keyword id="KW-0342">GTP-binding</keyword>
<keyword id="KW-0547">Nucleotide-binding</keyword>
<keyword id="KW-0648">Protein biosynthesis</keyword>
<keyword id="KW-1185">Reference proteome</keyword>
<evidence type="ECO:0000250" key="1"/>
<evidence type="ECO:0000305" key="2"/>
<gene>
    <name type="primary">prfC</name>
    <name type="ordered locus">PM0816</name>
</gene>
<feature type="chain" id="PRO_0000210953" description="Peptide chain release factor 3">
    <location>
        <begin position="1"/>
        <end position="529"/>
    </location>
</feature>
<feature type="domain" description="tr-type G">
    <location>
        <begin position="11"/>
        <end position="280"/>
    </location>
</feature>
<feature type="binding site" evidence="1">
    <location>
        <begin position="20"/>
        <end position="27"/>
    </location>
    <ligand>
        <name>GTP</name>
        <dbReference type="ChEBI" id="CHEBI:37565"/>
    </ligand>
</feature>
<feature type="binding site" evidence="1">
    <location>
        <begin position="88"/>
        <end position="92"/>
    </location>
    <ligand>
        <name>GTP</name>
        <dbReference type="ChEBI" id="CHEBI:37565"/>
    </ligand>
</feature>
<feature type="binding site" evidence="1">
    <location>
        <begin position="142"/>
        <end position="145"/>
    </location>
    <ligand>
        <name>GTP</name>
        <dbReference type="ChEBI" id="CHEBI:37565"/>
    </ligand>
</feature>
<comment type="function">
    <text evidence="1">Increases the formation of ribosomal termination complexes and stimulates activities of RF-1 and RF-2. It binds guanine nucleotides and has strong preference for UGA stop codons. It may interact directly with the ribosome. The stimulation of RF-1 and RF-2 is significantly reduced by GTP and GDP, but not by GMP (By similarity).</text>
</comment>
<comment type="subcellular location">
    <subcellularLocation>
        <location evidence="1">Cytoplasm</location>
    </subcellularLocation>
</comment>
<comment type="similarity">
    <text evidence="2">Belongs to the TRAFAC class translation factor GTPase superfamily. Classic translation factor GTPase family. PrfC subfamily.</text>
</comment>
<organism>
    <name type="scientific">Pasteurella multocida (strain Pm70)</name>
    <dbReference type="NCBI Taxonomy" id="272843"/>
    <lineage>
        <taxon>Bacteria</taxon>
        <taxon>Pseudomonadati</taxon>
        <taxon>Pseudomonadota</taxon>
        <taxon>Gammaproteobacteria</taxon>
        <taxon>Pasteurellales</taxon>
        <taxon>Pasteurellaceae</taxon>
        <taxon>Pasteurella</taxon>
    </lineage>
</organism>
<dbReference type="EMBL" id="AE004439">
    <property type="protein sequence ID" value="AAK02900.1"/>
    <property type="molecule type" value="Genomic_DNA"/>
</dbReference>
<dbReference type="RefSeq" id="WP_010906863.1">
    <property type="nucleotide sequence ID" value="NC_002663.1"/>
</dbReference>
<dbReference type="SMR" id="P57879"/>
<dbReference type="STRING" id="272843.PM0816"/>
<dbReference type="EnsemblBacteria" id="AAK02900">
    <property type="protein sequence ID" value="AAK02900"/>
    <property type="gene ID" value="PM0816"/>
</dbReference>
<dbReference type="KEGG" id="pmu:PM0816"/>
<dbReference type="PATRIC" id="fig|272843.6.peg.825"/>
<dbReference type="HOGENOM" id="CLU_002794_2_1_6"/>
<dbReference type="OrthoDB" id="9801472at2"/>
<dbReference type="Proteomes" id="UP000000809">
    <property type="component" value="Chromosome"/>
</dbReference>
<dbReference type="GO" id="GO:0005829">
    <property type="term" value="C:cytosol"/>
    <property type="evidence" value="ECO:0007669"/>
    <property type="project" value="TreeGrafter"/>
</dbReference>
<dbReference type="GO" id="GO:0005525">
    <property type="term" value="F:GTP binding"/>
    <property type="evidence" value="ECO:0007669"/>
    <property type="project" value="UniProtKB-UniRule"/>
</dbReference>
<dbReference type="GO" id="GO:0003924">
    <property type="term" value="F:GTPase activity"/>
    <property type="evidence" value="ECO:0007669"/>
    <property type="project" value="InterPro"/>
</dbReference>
<dbReference type="GO" id="GO:0097216">
    <property type="term" value="F:guanosine tetraphosphate binding"/>
    <property type="evidence" value="ECO:0007669"/>
    <property type="project" value="UniProtKB-ARBA"/>
</dbReference>
<dbReference type="GO" id="GO:0016150">
    <property type="term" value="F:translation release factor activity, codon nonspecific"/>
    <property type="evidence" value="ECO:0007669"/>
    <property type="project" value="TreeGrafter"/>
</dbReference>
<dbReference type="GO" id="GO:0016149">
    <property type="term" value="F:translation release factor activity, codon specific"/>
    <property type="evidence" value="ECO:0007669"/>
    <property type="project" value="UniProtKB-UniRule"/>
</dbReference>
<dbReference type="GO" id="GO:0006449">
    <property type="term" value="P:regulation of translational termination"/>
    <property type="evidence" value="ECO:0007669"/>
    <property type="project" value="UniProtKB-UniRule"/>
</dbReference>
<dbReference type="CDD" id="cd04169">
    <property type="entry name" value="RF3"/>
    <property type="match status" value="1"/>
</dbReference>
<dbReference type="CDD" id="cd03689">
    <property type="entry name" value="RF3_II"/>
    <property type="match status" value="1"/>
</dbReference>
<dbReference type="CDD" id="cd16259">
    <property type="entry name" value="RF3_III"/>
    <property type="match status" value="1"/>
</dbReference>
<dbReference type="FunFam" id="2.40.30.10:FF:000040">
    <property type="entry name" value="Peptide chain release factor 3"/>
    <property type="match status" value="1"/>
</dbReference>
<dbReference type="FunFam" id="3.30.70.3280:FF:000001">
    <property type="entry name" value="Peptide chain release factor 3"/>
    <property type="match status" value="1"/>
</dbReference>
<dbReference type="FunFam" id="3.40.50.300:FF:000542">
    <property type="entry name" value="Peptide chain release factor 3"/>
    <property type="match status" value="1"/>
</dbReference>
<dbReference type="Gene3D" id="3.40.50.300">
    <property type="entry name" value="P-loop containing nucleotide triphosphate hydrolases"/>
    <property type="match status" value="2"/>
</dbReference>
<dbReference type="Gene3D" id="3.30.70.3280">
    <property type="entry name" value="Peptide chain release factor 3, domain III"/>
    <property type="match status" value="1"/>
</dbReference>
<dbReference type="HAMAP" id="MF_00072">
    <property type="entry name" value="Rel_fac_3"/>
    <property type="match status" value="1"/>
</dbReference>
<dbReference type="InterPro" id="IPR053905">
    <property type="entry name" value="EF-G-like_DII"/>
</dbReference>
<dbReference type="InterPro" id="IPR035647">
    <property type="entry name" value="EFG_III/V"/>
</dbReference>
<dbReference type="InterPro" id="IPR031157">
    <property type="entry name" value="G_TR_CS"/>
</dbReference>
<dbReference type="InterPro" id="IPR027417">
    <property type="entry name" value="P-loop_NTPase"/>
</dbReference>
<dbReference type="InterPro" id="IPR004548">
    <property type="entry name" value="PrfC"/>
</dbReference>
<dbReference type="InterPro" id="IPR032090">
    <property type="entry name" value="RF3_C"/>
</dbReference>
<dbReference type="InterPro" id="IPR038467">
    <property type="entry name" value="RF3_dom_3_sf"/>
</dbReference>
<dbReference type="InterPro" id="IPR041732">
    <property type="entry name" value="RF3_GTP-bd"/>
</dbReference>
<dbReference type="InterPro" id="IPR005225">
    <property type="entry name" value="Small_GTP-bd"/>
</dbReference>
<dbReference type="InterPro" id="IPR000795">
    <property type="entry name" value="T_Tr_GTP-bd_dom"/>
</dbReference>
<dbReference type="InterPro" id="IPR009000">
    <property type="entry name" value="Transl_B-barrel_sf"/>
</dbReference>
<dbReference type="NCBIfam" id="TIGR00503">
    <property type="entry name" value="prfC"/>
    <property type="match status" value="1"/>
</dbReference>
<dbReference type="NCBIfam" id="NF001964">
    <property type="entry name" value="PRK00741.1"/>
    <property type="match status" value="1"/>
</dbReference>
<dbReference type="NCBIfam" id="TIGR00231">
    <property type="entry name" value="small_GTP"/>
    <property type="match status" value="1"/>
</dbReference>
<dbReference type="PANTHER" id="PTHR43556">
    <property type="entry name" value="PEPTIDE CHAIN RELEASE FACTOR RF3"/>
    <property type="match status" value="1"/>
</dbReference>
<dbReference type="PANTHER" id="PTHR43556:SF2">
    <property type="entry name" value="PEPTIDE CHAIN RELEASE FACTOR RF3"/>
    <property type="match status" value="1"/>
</dbReference>
<dbReference type="Pfam" id="PF22042">
    <property type="entry name" value="EF-G_D2"/>
    <property type="match status" value="1"/>
</dbReference>
<dbReference type="Pfam" id="PF00009">
    <property type="entry name" value="GTP_EFTU"/>
    <property type="match status" value="1"/>
</dbReference>
<dbReference type="Pfam" id="PF16658">
    <property type="entry name" value="RF3_C"/>
    <property type="match status" value="1"/>
</dbReference>
<dbReference type="PRINTS" id="PR00315">
    <property type="entry name" value="ELONGATNFCT"/>
</dbReference>
<dbReference type="SUPFAM" id="SSF54980">
    <property type="entry name" value="EF-G C-terminal domain-like"/>
    <property type="match status" value="1"/>
</dbReference>
<dbReference type="SUPFAM" id="SSF52540">
    <property type="entry name" value="P-loop containing nucleoside triphosphate hydrolases"/>
    <property type="match status" value="1"/>
</dbReference>
<dbReference type="SUPFAM" id="SSF50447">
    <property type="entry name" value="Translation proteins"/>
    <property type="match status" value="1"/>
</dbReference>
<dbReference type="PROSITE" id="PS00301">
    <property type="entry name" value="G_TR_1"/>
    <property type="match status" value="1"/>
</dbReference>
<dbReference type="PROSITE" id="PS51722">
    <property type="entry name" value="G_TR_2"/>
    <property type="match status" value="1"/>
</dbReference>
<accession>P57879</accession>
<sequence>MSLNDYPQQVNKRRTFAIISHPDAGKTTITEKVLLYGQAIQTAGSVKGKGSSTHAKSDWMEMEKQRGISITTSVMQFPYNDCLVNLLDTPGHEDFSEDTYRTLTAVDSCLMVIDSAKGVEERTIKLMEVTRLRDTPILTFMNKLDRDIRDPMELLDEVENVLNIHCAPITWPIGCGKLFKGVYHLYKDETYLYQTGQGHTIQEKRVIKGLDNPELDAAVGDDLAQQLRDELELVQGASNEFDLDAFLQGELTPVFFGTALGNFGVDHFLDGLTQWAPAPQSRQADSRAVASSEQKLTGFVFKIQANMDPKHRDRVAFMRVVSGKYEKGMKLRHVRLGKDVVISDALTFMAGDRSHAEEAYAGDIIGLHNHGTIQIGDTFTQGEELKFTGIPNFAPELFRRIRLKDPLKQKQLLKGLVQLSEEGAVQVFRPLMNNDLIVGAVGVLQFDVVVSRLKSEYNVEAIYENINVATARWVECSDAKKFDEFKRKNEQNLALDGGDNLTYIAPTMVNLNLAQERYPDVKFFKTREH</sequence>
<name>RF3_PASMU</name>